<name>THIG_SALPA</name>
<organism>
    <name type="scientific">Salmonella paratyphi A (strain ATCC 9150 / SARB42)</name>
    <dbReference type="NCBI Taxonomy" id="295319"/>
    <lineage>
        <taxon>Bacteria</taxon>
        <taxon>Pseudomonadati</taxon>
        <taxon>Pseudomonadota</taxon>
        <taxon>Gammaproteobacteria</taxon>
        <taxon>Enterobacterales</taxon>
        <taxon>Enterobacteriaceae</taxon>
        <taxon>Salmonella</taxon>
    </lineage>
</organism>
<keyword id="KW-0963">Cytoplasm</keyword>
<keyword id="KW-0704">Schiff base</keyword>
<keyword id="KW-0784">Thiamine biosynthesis</keyword>
<keyword id="KW-0808">Transferase</keyword>
<gene>
    <name evidence="1" type="primary">thiG</name>
    <name type="ordered locus">SPA3997</name>
</gene>
<dbReference type="EC" id="2.8.1.10" evidence="1"/>
<dbReference type="EMBL" id="CP000026">
    <property type="protein sequence ID" value="AAV79749.1"/>
    <property type="molecule type" value="Genomic_DNA"/>
</dbReference>
<dbReference type="RefSeq" id="WP_000944070.1">
    <property type="nucleotide sequence ID" value="NC_006511.1"/>
</dbReference>
<dbReference type="SMR" id="Q5PK87"/>
<dbReference type="KEGG" id="spt:SPA3997"/>
<dbReference type="HOGENOM" id="CLU_062233_1_0_6"/>
<dbReference type="UniPathway" id="UPA00060"/>
<dbReference type="Proteomes" id="UP000008185">
    <property type="component" value="Chromosome"/>
</dbReference>
<dbReference type="GO" id="GO:0005737">
    <property type="term" value="C:cytoplasm"/>
    <property type="evidence" value="ECO:0007669"/>
    <property type="project" value="UniProtKB-SubCell"/>
</dbReference>
<dbReference type="GO" id="GO:1990107">
    <property type="term" value="F:thiazole synthase activity"/>
    <property type="evidence" value="ECO:0007669"/>
    <property type="project" value="UniProtKB-EC"/>
</dbReference>
<dbReference type="GO" id="GO:0009229">
    <property type="term" value="P:thiamine diphosphate biosynthetic process"/>
    <property type="evidence" value="ECO:0007669"/>
    <property type="project" value="UniProtKB-UniRule"/>
</dbReference>
<dbReference type="CDD" id="cd04728">
    <property type="entry name" value="ThiG"/>
    <property type="match status" value="1"/>
</dbReference>
<dbReference type="FunFam" id="3.20.20.70:FF:000049">
    <property type="entry name" value="Thiazole synthase"/>
    <property type="match status" value="1"/>
</dbReference>
<dbReference type="Gene3D" id="3.20.20.70">
    <property type="entry name" value="Aldolase class I"/>
    <property type="match status" value="1"/>
</dbReference>
<dbReference type="HAMAP" id="MF_00443">
    <property type="entry name" value="ThiG"/>
    <property type="match status" value="1"/>
</dbReference>
<dbReference type="InterPro" id="IPR013785">
    <property type="entry name" value="Aldolase_TIM"/>
</dbReference>
<dbReference type="InterPro" id="IPR033983">
    <property type="entry name" value="Thiazole_synthase_ThiG"/>
</dbReference>
<dbReference type="InterPro" id="IPR008867">
    <property type="entry name" value="ThiG"/>
</dbReference>
<dbReference type="PANTHER" id="PTHR34266">
    <property type="entry name" value="THIAZOLE SYNTHASE"/>
    <property type="match status" value="1"/>
</dbReference>
<dbReference type="PANTHER" id="PTHR34266:SF2">
    <property type="entry name" value="THIAZOLE SYNTHASE"/>
    <property type="match status" value="1"/>
</dbReference>
<dbReference type="Pfam" id="PF05690">
    <property type="entry name" value="ThiG"/>
    <property type="match status" value="1"/>
</dbReference>
<dbReference type="SUPFAM" id="SSF110399">
    <property type="entry name" value="ThiG-like"/>
    <property type="match status" value="1"/>
</dbReference>
<proteinExistence type="inferred from homology"/>
<protein>
    <recommendedName>
        <fullName evidence="1">Thiazole synthase</fullName>
        <ecNumber evidence="1">2.8.1.10</ecNumber>
    </recommendedName>
</protein>
<comment type="function">
    <text evidence="1">Catalyzes the rearrangement of 1-deoxy-D-xylulose 5-phosphate (DXP) to produce the thiazole phosphate moiety of thiamine. Sulfur is provided by the thiocarboxylate moiety of the carrier protein ThiS. In vitro, sulfur can be provided by H(2)S.</text>
</comment>
<comment type="catalytic activity">
    <reaction evidence="1">
        <text>[ThiS sulfur-carrier protein]-C-terminal-Gly-aminoethanethioate + 2-iminoacetate + 1-deoxy-D-xylulose 5-phosphate = [ThiS sulfur-carrier protein]-C-terminal Gly-Gly + 2-[(2R,5Z)-2-carboxy-4-methylthiazol-5(2H)-ylidene]ethyl phosphate + 2 H2O + H(+)</text>
        <dbReference type="Rhea" id="RHEA:26297"/>
        <dbReference type="Rhea" id="RHEA-COMP:12909"/>
        <dbReference type="Rhea" id="RHEA-COMP:19908"/>
        <dbReference type="ChEBI" id="CHEBI:15377"/>
        <dbReference type="ChEBI" id="CHEBI:15378"/>
        <dbReference type="ChEBI" id="CHEBI:57792"/>
        <dbReference type="ChEBI" id="CHEBI:62899"/>
        <dbReference type="ChEBI" id="CHEBI:77846"/>
        <dbReference type="ChEBI" id="CHEBI:90778"/>
        <dbReference type="ChEBI" id="CHEBI:232372"/>
        <dbReference type="EC" id="2.8.1.10"/>
    </reaction>
</comment>
<comment type="pathway">
    <text evidence="1">Cofactor biosynthesis; thiamine diphosphate biosynthesis.</text>
</comment>
<comment type="subunit">
    <text evidence="1">Homotetramer. Forms heterodimers with either ThiH or ThiS.</text>
</comment>
<comment type="subcellular location">
    <subcellularLocation>
        <location evidence="1">Cytoplasm</location>
    </subcellularLocation>
</comment>
<comment type="similarity">
    <text evidence="1">Belongs to the ThiG family.</text>
</comment>
<sequence>MLRIADKTFDSHLFTGTGKFASSQLMVEAIRASGSQLVTLAMKRVDLRQHNDAILAPLIEAGVTLLPNTSGAKTAEEAIFAAQLAREALGTHWLKLEIHPDARWLLPDPIETLKAAEALVKQGFVVLPYCGADPVLCKRLEEVGCAAVMPLGAPIGSNQGLETKAMLEIIIQQATVPVVVDAGIGVPSHATQALEMGADAVLVNTAIAVADNPVMMATAFRLAVEAGLLARQAVPGNRSTYASATSPLTGFLEALA</sequence>
<feature type="chain" id="PRO_0000162855" description="Thiazole synthase">
    <location>
        <begin position="1"/>
        <end position="256"/>
    </location>
</feature>
<feature type="active site" description="Schiff-base intermediate with DXP" evidence="1">
    <location>
        <position position="95"/>
    </location>
</feature>
<feature type="binding site" evidence="1">
    <location>
        <position position="156"/>
    </location>
    <ligand>
        <name>1-deoxy-D-xylulose 5-phosphate</name>
        <dbReference type="ChEBI" id="CHEBI:57792"/>
    </ligand>
</feature>
<feature type="binding site" evidence="1">
    <location>
        <begin position="182"/>
        <end position="183"/>
    </location>
    <ligand>
        <name>1-deoxy-D-xylulose 5-phosphate</name>
        <dbReference type="ChEBI" id="CHEBI:57792"/>
    </ligand>
</feature>
<feature type="binding site" evidence="1">
    <location>
        <begin position="204"/>
        <end position="205"/>
    </location>
    <ligand>
        <name>1-deoxy-D-xylulose 5-phosphate</name>
        <dbReference type="ChEBI" id="CHEBI:57792"/>
    </ligand>
</feature>
<reference key="1">
    <citation type="journal article" date="2004" name="Nat. Genet.">
        <title>Comparison of genome degradation in Paratyphi A and Typhi, human-restricted serovars of Salmonella enterica that cause typhoid.</title>
        <authorList>
            <person name="McClelland M."/>
            <person name="Sanderson K.E."/>
            <person name="Clifton S.W."/>
            <person name="Latreille P."/>
            <person name="Porwollik S."/>
            <person name="Sabo A."/>
            <person name="Meyer R."/>
            <person name="Bieri T."/>
            <person name="Ozersky P."/>
            <person name="McLellan M."/>
            <person name="Harkins C.R."/>
            <person name="Wang C."/>
            <person name="Nguyen C."/>
            <person name="Berghoff A."/>
            <person name="Elliott G."/>
            <person name="Kohlberg S."/>
            <person name="Strong C."/>
            <person name="Du F."/>
            <person name="Carter J."/>
            <person name="Kremizki C."/>
            <person name="Layman D."/>
            <person name="Leonard S."/>
            <person name="Sun H."/>
            <person name="Fulton L."/>
            <person name="Nash W."/>
            <person name="Miner T."/>
            <person name="Minx P."/>
            <person name="Delehaunty K."/>
            <person name="Fronick C."/>
            <person name="Magrini V."/>
            <person name="Nhan M."/>
            <person name="Warren W."/>
            <person name="Florea L."/>
            <person name="Spieth J."/>
            <person name="Wilson R.K."/>
        </authorList>
    </citation>
    <scope>NUCLEOTIDE SEQUENCE [LARGE SCALE GENOMIC DNA]</scope>
    <source>
        <strain>ATCC 9150 / SARB42</strain>
    </source>
</reference>
<accession>Q5PK87</accession>
<evidence type="ECO:0000255" key="1">
    <source>
        <dbReference type="HAMAP-Rule" id="MF_00443"/>
    </source>
</evidence>